<protein>
    <recommendedName>
        <fullName evidence="1">Acyl carrier protein phosphodiesterase</fullName>
        <shortName evidence="1">ACP phosphodiesterase</shortName>
        <ecNumber evidence="1">3.1.4.14</ecNumber>
    </recommendedName>
</protein>
<keyword id="KW-0275">Fatty acid biosynthesis</keyword>
<keyword id="KW-0276">Fatty acid metabolism</keyword>
<keyword id="KW-0378">Hydrolase</keyword>
<keyword id="KW-0444">Lipid biosynthesis</keyword>
<keyword id="KW-0443">Lipid metabolism</keyword>
<proteinExistence type="inferred from homology"/>
<gene>
    <name evidence="1" type="primary">acpH</name>
    <name type="ordered locus">Ent638_0873</name>
</gene>
<evidence type="ECO:0000255" key="1">
    <source>
        <dbReference type="HAMAP-Rule" id="MF_01950"/>
    </source>
</evidence>
<comment type="function">
    <text evidence="1">Converts holo-ACP to apo-ACP by hydrolytic cleavage of the phosphopantetheine prosthetic group from ACP.</text>
</comment>
<comment type="catalytic activity">
    <reaction evidence="1">
        <text>holo-[ACP] + H2O = apo-[ACP] + (R)-4'-phosphopantetheine + H(+)</text>
        <dbReference type="Rhea" id="RHEA:20537"/>
        <dbReference type="Rhea" id="RHEA-COMP:9685"/>
        <dbReference type="Rhea" id="RHEA-COMP:9690"/>
        <dbReference type="ChEBI" id="CHEBI:15377"/>
        <dbReference type="ChEBI" id="CHEBI:15378"/>
        <dbReference type="ChEBI" id="CHEBI:29999"/>
        <dbReference type="ChEBI" id="CHEBI:61723"/>
        <dbReference type="ChEBI" id="CHEBI:64479"/>
        <dbReference type="EC" id="3.1.4.14"/>
    </reaction>
</comment>
<comment type="similarity">
    <text evidence="1">Belongs to the AcpH family.</text>
</comment>
<name>ACPH_ENT38</name>
<reference key="1">
    <citation type="journal article" date="2010" name="PLoS Genet.">
        <title>Genome sequence of the plant growth promoting endophytic bacterium Enterobacter sp. 638.</title>
        <authorList>
            <person name="Taghavi S."/>
            <person name="van der Lelie D."/>
            <person name="Hoffman A."/>
            <person name="Zhang Y.B."/>
            <person name="Walla M.D."/>
            <person name="Vangronsveld J."/>
            <person name="Newman L."/>
            <person name="Monchy S."/>
        </authorList>
    </citation>
    <scope>NUCLEOTIDE SEQUENCE [LARGE SCALE GENOMIC DNA]</scope>
    <source>
        <strain>638</strain>
    </source>
</reference>
<dbReference type="EC" id="3.1.4.14" evidence="1"/>
<dbReference type="EMBL" id="CP000653">
    <property type="protein sequence ID" value="ABP59557.1"/>
    <property type="molecule type" value="Genomic_DNA"/>
</dbReference>
<dbReference type="RefSeq" id="WP_012016278.1">
    <property type="nucleotide sequence ID" value="NC_009436.1"/>
</dbReference>
<dbReference type="SMR" id="A4W777"/>
<dbReference type="STRING" id="399742.Ent638_0873"/>
<dbReference type="KEGG" id="ent:Ent638_0873"/>
<dbReference type="eggNOG" id="COG3124">
    <property type="taxonomic scope" value="Bacteria"/>
</dbReference>
<dbReference type="HOGENOM" id="CLU_099370_1_0_6"/>
<dbReference type="OrthoDB" id="8442777at2"/>
<dbReference type="Proteomes" id="UP000000230">
    <property type="component" value="Chromosome"/>
</dbReference>
<dbReference type="GO" id="GO:0008770">
    <property type="term" value="F:[acyl-carrier-protein] phosphodiesterase activity"/>
    <property type="evidence" value="ECO:0007669"/>
    <property type="project" value="UniProtKB-UniRule"/>
</dbReference>
<dbReference type="GO" id="GO:0006633">
    <property type="term" value="P:fatty acid biosynthetic process"/>
    <property type="evidence" value="ECO:0007669"/>
    <property type="project" value="UniProtKB-UniRule"/>
</dbReference>
<dbReference type="HAMAP" id="MF_01950">
    <property type="entry name" value="AcpH"/>
    <property type="match status" value="1"/>
</dbReference>
<dbReference type="InterPro" id="IPR007431">
    <property type="entry name" value="ACP_PD"/>
</dbReference>
<dbReference type="InterPro" id="IPR023491">
    <property type="entry name" value="ACP_phosphodiesterase_gpbac"/>
</dbReference>
<dbReference type="NCBIfam" id="NF007466">
    <property type="entry name" value="PRK10045.1"/>
    <property type="match status" value="1"/>
</dbReference>
<dbReference type="PANTHER" id="PTHR38764">
    <property type="entry name" value="ACYL CARRIER PROTEIN PHOSPHODIESTERASE"/>
    <property type="match status" value="1"/>
</dbReference>
<dbReference type="PANTHER" id="PTHR38764:SF1">
    <property type="entry name" value="ACYL CARRIER PROTEIN PHOSPHODIESTERASE"/>
    <property type="match status" value="1"/>
</dbReference>
<dbReference type="Pfam" id="PF04336">
    <property type="entry name" value="ACP_PD"/>
    <property type="match status" value="1"/>
</dbReference>
<dbReference type="PIRSF" id="PIRSF011489">
    <property type="entry name" value="DUF479"/>
    <property type="match status" value="1"/>
</dbReference>
<organism>
    <name type="scientific">Enterobacter sp. (strain 638)</name>
    <dbReference type="NCBI Taxonomy" id="399742"/>
    <lineage>
        <taxon>Bacteria</taxon>
        <taxon>Pseudomonadati</taxon>
        <taxon>Pseudomonadota</taxon>
        <taxon>Gammaproteobacteria</taxon>
        <taxon>Enterobacterales</taxon>
        <taxon>Enterobacteriaceae</taxon>
        <taxon>Enterobacter</taxon>
    </lineage>
</organism>
<sequence>MNFLAHLHLAHLADSSLSGNLLADFVRGNPTQAYPTDVVDGIFMHRRIDVLTDNLPEVKEAKEWFRPETRRVAPITLDVMWDHFLSRHWAQLSPEMPLPEFVRYAHSQVAMILPDSPPRFVNLNEYLWSERWLERYREMDFIQRVLNGMASRRPRLDALRDSWQDLDTHYDALESRFWQFYPRMMVQAKNKQL</sequence>
<feature type="chain" id="PRO_1000070625" description="Acyl carrier protein phosphodiesterase">
    <location>
        <begin position="1"/>
        <end position="193"/>
    </location>
</feature>
<accession>A4W777</accession>